<accession>P13372</accession>
<evidence type="ECO:0000250" key="1">
    <source>
        <dbReference type="UniProtKB" id="P12018"/>
    </source>
</evidence>
<evidence type="ECO:0000255" key="2"/>
<evidence type="ECO:0000255" key="3">
    <source>
        <dbReference type="PROSITE-ProRule" id="PRU00114"/>
    </source>
</evidence>
<evidence type="ECO:0000269" key="4">
    <source>
    </source>
</evidence>
<evidence type="ECO:0000269" key="5">
    <source>
    </source>
</evidence>
<evidence type="ECO:0000305" key="6"/>
<evidence type="ECO:0000305" key="7">
    <source>
    </source>
</evidence>
<evidence type="ECO:0000312" key="8">
    <source>
        <dbReference type="MGI" id="MGI:98936"/>
    </source>
</evidence>
<dbReference type="EMBL" id="X05556">
    <property type="protein sequence ID" value="CAA29071.1"/>
    <property type="molecule type" value="mRNA"/>
</dbReference>
<dbReference type="EMBL" id="X05557">
    <property type="protein sequence ID" value="CAA29072.1"/>
    <property type="molecule type" value="Genomic_DNA"/>
</dbReference>
<dbReference type="CCDS" id="CCDS27989.1"/>
<dbReference type="PIR" id="A28344">
    <property type="entry name" value="A28344"/>
</dbReference>
<dbReference type="RefSeq" id="NP_058678.1">
    <property type="nucleotide sequence ID" value="NM_016982.2"/>
</dbReference>
<dbReference type="SMR" id="P13372"/>
<dbReference type="BioGRID" id="204532">
    <property type="interactions" value="1"/>
</dbReference>
<dbReference type="FunCoup" id="P13372">
    <property type="interactions" value="617"/>
</dbReference>
<dbReference type="STRING" id="10090.ENSMUSP00000074537"/>
<dbReference type="PhosphoSitePlus" id="P13372"/>
<dbReference type="PaxDb" id="10090-ENSMUSP00000074537"/>
<dbReference type="DNASU" id="22362"/>
<dbReference type="Ensembl" id="ENSMUST00000075017.5">
    <property type="protein sequence ID" value="ENSMUSP00000074537.5"/>
    <property type="gene ID" value="ENSMUSG00000059305.13"/>
</dbReference>
<dbReference type="GeneID" id="22362"/>
<dbReference type="KEGG" id="mmu:22362"/>
<dbReference type="UCSC" id="uc007yjg.2">
    <property type="organism name" value="mouse"/>
</dbReference>
<dbReference type="AGR" id="MGI:98936"/>
<dbReference type="CTD" id="22362"/>
<dbReference type="MGI" id="MGI:98936">
    <property type="gene designation" value="Vpreb1a"/>
</dbReference>
<dbReference type="VEuPathDB" id="HostDB:ENSMUSG00000059305"/>
<dbReference type="eggNOG" id="ENOG502RTXJ">
    <property type="taxonomic scope" value="Eukaryota"/>
</dbReference>
<dbReference type="GeneTree" id="ENSGT00940000161017"/>
<dbReference type="HOGENOM" id="CLU_077975_4_0_1"/>
<dbReference type="InParanoid" id="P13372"/>
<dbReference type="OMA" id="YCSVGTQ"/>
<dbReference type="OrthoDB" id="8908372at2759"/>
<dbReference type="PhylomeDB" id="P13372"/>
<dbReference type="TreeFam" id="TF352061"/>
<dbReference type="BioGRID-ORCS" id="22362">
    <property type="hits" value="0 hits in 44 CRISPR screens"/>
</dbReference>
<dbReference type="PRO" id="PR:P13372"/>
<dbReference type="Proteomes" id="UP000000589">
    <property type="component" value="Chromosome 16"/>
</dbReference>
<dbReference type="RNAct" id="P13372">
    <property type="molecule type" value="protein"/>
</dbReference>
<dbReference type="Bgee" id="ENSMUSG00000059305">
    <property type="expression patterns" value="Expressed in choroid plexus and 62 other cell types or tissues"/>
</dbReference>
<dbReference type="ExpressionAtlas" id="P13372">
    <property type="expression patterns" value="baseline and differential"/>
</dbReference>
<dbReference type="GO" id="GO:0005783">
    <property type="term" value="C:endoplasmic reticulum"/>
    <property type="evidence" value="ECO:0007669"/>
    <property type="project" value="UniProtKB-SubCell"/>
</dbReference>
<dbReference type="GO" id="GO:0009897">
    <property type="term" value="C:external side of plasma membrane"/>
    <property type="evidence" value="ECO:0000314"/>
    <property type="project" value="MGI"/>
</dbReference>
<dbReference type="GO" id="GO:0005886">
    <property type="term" value="C:plasma membrane"/>
    <property type="evidence" value="ECO:0000353"/>
    <property type="project" value="MGI"/>
</dbReference>
<dbReference type="GO" id="GO:0038023">
    <property type="term" value="F:signaling receptor activity"/>
    <property type="evidence" value="ECO:0000353"/>
    <property type="project" value="MGI"/>
</dbReference>
<dbReference type="GO" id="GO:0001782">
    <property type="term" value="P:B cell homeostasis"/>
    <property type="evidence" value="ECO:0000316"/>
    <property type="project" value="MGI"/>
</dbReference>
<dbReference type="GO" id="GO:0042100">
    <property type="term" value="P:B cell proliferation"/>
    <property type="evidence" value="ECO:0000315"/>
    <property type="project" value="MGI"/>
</dbReference>
<dbReference type="GO" id="GO:0000902">
    <property type="term" value="P:cell morphogenesis"/>
    <property type="evidence" value="ECO:0000316"/>
    <property type="project" value="MGI"/>
</dbReference>
<dbReference type="GO" id="GO:0030097">
    <property type="term" value="P:hemopoiesis"/>
    <property type="evidence" value="ECO:0000315"/>
    <property type="project" value="MGI"/>
</dbReference>
<dbReference type="GO" id="GO:0006955">
    <property type="term" value="P:immune response"/>
    <property type="evidence" value="ECO:0000353"/>
    <property type="project" value="MGI"/>
</dbReference>
<dbReference type="GO" id="GO:0008361">
    <property type="term" value="P:regulation of cell size"/>
    <property type="evidence" value="ECO:0000314"/>
    <property type="project" value="MGI"/>
</dbReference>
<dbReference type="FunFam" id="2.60.40.10:FF:000721">
    <property type="entry name" value="Immunoglobulin lambda variable 5-45"/>
    <property type="match status" value="1"/>
</dbReference>
<dbReference type="Gene3D" id="2.60.40.10">
    <property type="entry name" value="Immunoglobulins"/>
    <property type="match status" value="1"/>
</dbReference>
<dbReference type="InterPro" id="IPR007110">
    <property type="entry name" value="Ig-like_dom"/>
</dbReference>
<dbReference type="InterPro" id="IPR036179">
    <property type="entry name" value="Ig-like_dom_sf"/>
</dbReference>
<dbReference type="InterPro" id="IPR013783">
    <property type="entry name" value="Ig-like_fold"/>
</dbReference>
<dbReference type="InterPro" id="IPR003599">
    <property type="entry name" value="Ig_sub"/>
</dbReference>
<dbReference type="InterPro" id="IPR013106">
    <property type="entry name" value="Ig_V-set"/>
</dbReference>
<dbReference type="InterPro" id="IPR050150">
    <property type="entry name" value="IgV_Light_Chain"/>
</dbReference>
<dbReference type="PANTHER" id="PTHR23267">
    <property type="entry name" value="IMMUNOGLOBULIN LIGHT CHAIN"/>
    <property type="match status" value="1"/>
</dbReference>
<dbReference type="Pfam" id="PF07686">
    <property type="entry name" value="V-set"/>
    <property type="match status" value="1"/>
</dbReference>
<dbReference type="SMART" id="SM00409">
    <property type="entry name" value="IG"/>
    <property type="match status" value="1"/>
</dbReference>
<dbReference type="SMART" id="SM00406">
    <property type="entry name" value="IGv"/>
    <property type="match status" value="1"/>
</dbReference>
<dbReference type="SUPFAM" id="SSF48726">
    <property type="entry name" value="Immunoglobulin"/>
    <property type="match status" value="1"/>
</dbReference>
<dbReference type="PROSITE" id="PS50835">
    <property type="entry name" value="IG_LIKE"/>
    <property type="match status" value="1"/>
</dbReference>
<keyword id="KW-1015">Disulfide bond</keyword>
<keyword id="KW-0256">Endoplasmic reticulum</keyword>
<keyword id="KW-0393">Immunoglobulin domain</keyword>
<keyword id="KW-1185">Reference proteome</keyword>
<keyword id="KW-0732">Signal</keyword>
<sequence length="142" mass="16125">MAWTSVLLMLLAYLTGCGPQPMVHQPPLASSSLGATIRLSCTLSNDHNIGIYSIYWYQQRPGHPPRFLLRYFSHSDKHQGPDIPPRFSGSKDTTRNLGYLSISELQPEDEAVYYCAVGLRSQEKKRMEREWEGEKSYTDLGS</sequence>
<feature type="signal peptide" evidence="2">
    <location>
        <begin position="1"/>
        <end position="19"/>
    </location>
</feature>
<feature type="chain" id="PRO_0000015001" description="Immunoglobulin iota chain">
    <location>
        <begin position="20"/>
        <end position="142"/>
    </location>
</feature>
<feature type="region of interest" description="Framework-1">
    <location>
        <begin position="20"/>
        <end position="41"/>
    </location>
</feature>
<feature type="region of interest" description="Complementarity-determining-1">
    <location>
        <begin position="42"/>
        <end position="56"/>
    </location>
</feature>
<feature type="region of interest" description="Framework-2">
    <location>
        <begin position="57"/>
        <end position="70"/>
    </location>
</feature>
<feature type="region of interest" description="Complementarity-determining-2">
    <location>
        <begin position="71"/>
        <end position="81"/>
    </location>
</feature>
<feature type="region of interest" description="Framework-3">
    <location>
        <begin position="82"/>
        <end position="115"/>
    </location>
</feature>
<feature type="disulfide bond" evidence="3">
    <location>
        <begin position="41"/>
        <end position="115"/>
    </location>
</feature>
<proteinExistence type="evidence at protein level"/>
<reference key="1">
    <citation type="journal article" date="1987" name="EMBO J.">
        <title>A second gene, VpreB in the lambda 5 locus of the mouse, which appears to be selectively expressed in pre-B lymphocytes.</title>
        <authorList>
            <person name="Kudo A."/>
            <person name="Melchers F."/>
        </authorList>
    </citation>
    <scope>NUCLEOTIDE SEQUENCE [GENOMIC DNA / MRNA]</scope>
    <scope>TISSUE SPECIFICITY</scope>
    <source>
        <strain>C57BL/6 X DBA/2J</strain>
    </source>
</reference>
<reference key="2">
    <citation type="journal article" date="2018" name="J. Biol. Chem.">
        <title>The endoplasmic reticulum-resident E3 ubiquitin ligase Hrd1 controls a critical checkpoint in B cell development in mice.</title>
        <authorList>
            <person name="Yang Y."/>
            <person name="Kong S."/>
            <person name="Zhang Y."/>
            <person name="Melo-Cardenas J."/>
            <person name="Gao B."/>
            <person name="Zhang Y."/>
            <person name="Zhang D.D."/>
            <person name="Zhang B."/>
            <person name="Song J."/>
            <person name="Thorp E."/>
            <person name="Zhang K."/>
            <person name="Zhang J."/>
            <person name="Fang D."/>
        </authorList>
    </citation>
    <scope>INTERACTION WITH SYVN1</scope>
    <scope>SUBCELLULAR LOCATION</scope>
</reference>
<protein>
    <recommendedName>
        <fullName evidence="6">Immunoglobulin iota chain</fullName>
    </recommendedName>
    <alternativeName>
        <fullName>Protein VPreB1</fullName>
    </alternativeName>
    <alternativeName>
        <fullName evidence="8">V-set pre-B cell surrogate light chain 1A</fullName>
    </alternativeName>
    <cdAntigenName>CD179a</cdAntigenName>
</protein>
<comment type="function">
    <text>Associates with the Ig-mu chain to form a molecular complex that is expressed on the surface of pre-B-cells. This complex presumably regulates Ig gene rearrangements in the early steps of B-cell differentiation.</text>
</comment>
<comment type="subunit">
    <text evidence="1 4">Interacts with IGLL1 (By similarity). Interacts with SYNV1/HRD1 (via N-terminus); this interaction leads to increased VPREB1A ubiquitination and degradation in pre-B cells, possibly through a lysosomal, not proteasomal, pathway (PubMed:29907570).</text>
</comment>
<comment type="subcellular location">
    <subcellularLocation>
        <location evidence="7">Endoplasmic reticulum</location>
    </subcellularLocation>
</comment>
<comment type="tissue specificity">
    <text evidence="5">Only expressed by pre-B-cells.</text>
</comment>
<comment type="similarity">
    <text evidence="6">Belongs to the immunoglobulin superfamily.</text>
</comment>
<organism>
    <name type="scientific">Mus musculus</name>
    <name type="common">Mouse</name>
    <dbReference type="NCBI Taxonomy" id="10090"/>
    <lineage>
        <taxon>Eukaryota</taxon>
        <taxon>Metazoa</taxon>
        <taxon>Chordata</taxon>
        <taxon>Craniata</taxon>
        <taxon>Vertebrata</taxon>
        <taxon>Euteleostomi</taxon>
        <taxon>Mammalia</taxon>
        <taxon>Eutheria</taxon>
        <taxon>Euarchontoglires</taxon>
        <taxon>Glires</taxon>
        <taxon>Rodentia</taxon>
        <taxon>Myomorpha</taxon>
        <taxon>Muroidea</taxon>
        <taxon>Muridae</taxon>
        <taxon>Murinae</taxon>
        <taxon>Mus</taxon>
        <taxon>Mus</taxon>
    </lineage>
</organism>
<gene>
    <name evidence="8" type="primary">Vpreb1a</name>
    <name evidence="8" type="synonym">Vpreb1</name>
</gene>
<name>VPB1A_MOUSE</name>